<protein>
    <recommendedName>
        <fullName>Antitoxin MazE</fullName>
    </recommendedName>
</protein>
<name>MAZE_STAAN</name>
<keyword id="KW-1277">Toxin-antitoxin system</keyword>
<proteinExistence type="evidence at protein level"/>
<dbReference type="EMBL" id="BA000018">
    <property type="protein sequence ID" value="BAB43156.1"/>
    <property type="molecule type" value="Genomic_DNA"/>
</dbReference>
<dbReference type="PIR" id="C89999">
    <property type="entry name" value="C89999"/>
</dbReference>
<dbReference type="RefSeq" id="WP_000948331.1">
    <property type="nucleotide sequence ID" value="NC_002745.2"/>
</dbReference>
<dbReference type="SMR" id="Q7A4G8"/>
<dbReference type="EnsemblBacteria" id="BAB43156">
    <property type="protein sequence ID" value="BAB43156"/>
    <property type="gene ID" value="BAB43156"/>
</dbReference>
<dbReference type="GeneID" id="98346377"/>
<dbReference type="KEGG" id="sau:SAS067"/>
<dbReference type="HOGENOM" id="CLU_3012108_0_0_9"/>
<dbReference type="GO" id="GO:0006355">
    <property type="term" value="P:regulation of DNA-templated transcription"/>
    <property type="evidence" value="ECO:0007669"/>
    <property type="project" value="InterPro"/>
</dbReference>
<dbReference type="Gene3D" id="1.10.1220.10">
    <property type="entry name" value="Met repressor-like"/>
    <property type="match status" value="1"/>
</dbReference>
<dbReference type="InterPro" id="IPR013321">
    <property type="entry name" value="Arc_rbn_hlx_hlx"/>
</dbReference>
<dbReference type="InterPro" id="IPR048242">
    <property type="entry name" value="MazE"/>
</dbReference>
<dbReference type="NCBIfam" id="NF041459">
    <property type="entry name" value="antitoxMazE_Staph"/>
    <property type="match status" value="1"/>
</dbReference>
<reference key="1">
    <citation type="journal article" date="2001" name="Lancet">
        <title>Whole genome sequencing of meticillin-resistant Staphylococcus aureus.</title>
        <authorList>
            <person name="Kuroda M."/>
            <person name="Ohta T."/>
            <person name="Uchiyama I."/>
            <person name="Baba T."/>
            <person name="Yuzawa H."/>
            <person name="Kobayashi I."/>
            <person name="Cui L."/>
            <person name="Oguchi A."/>
            <person name="Aoki K."/>
            <person name="Nagai Y."/>
            <person name="Lian J.-Q."/>
            <person name="Ito T."/>
            <person name="Kanamori M."/>
            <person name="Matsumaru H."/>
            <person name="Maruyama A."/>
            <person name="Murakami H."/>
            <person name="Hosoyama A."/>
            <person name="Mizutani-Ui Y."/>
            <person name="Takahashi N.K."/>
            <person name="Sawano T."/>
            <person name="Inoue R."/>
            <person name="Kaito C."/>
            <person name="Sekimizu K."/>
            <person name="Hirakawa H."/>
            <person name="Kuhara S."/>
            <person name="Goto S."/>
            <person name="Yabuzaki J."/>
            <person name="Kanehisa M."/>
            <person name="Yamashita A."/>
            <person name="Oshima K."/>
            <person name="Furuya K."/>
            <person name="Yoshino C."/>
            <person name="Shiba T."/>
            <person name="Hattori M."/>
            <person name="Ogasawara N."/>
            <person name="Hayashi H."/>
            <person name="Hiramatsu K."/>
        </authorList>
    </citation>
    <scope>NUCLEOTIDE SEQUENCE [LARGE SCALE GENOMIC DNA]</scope>
    <source>
        <strain>N315</strain>
    </source>
</reference>
<reference key="2">
    <citation type="journal article" date="2014" name="Nucleic Acids Res.">
        <title>Structural and biophysical characterization of Staphylococcus aureus SaMazF shows conservation of functional dynamics.</title>
        <authorList>
            <person name="Zorzini V."/>
            <person name="Buts L."/>
            <person name="Sleutel M."/>
            <person name="Garcia-Pino A."/>
            <person name="Talavera A."/>
            <person name="Haesaerts S."/>
            <person name="De Greve H."/>
            <person name="Cheung A."/>
            <person name="van Nuland N.A."/>
            <person name="Loris R."/>
        </authorList>
    </citation>
    <scope>FUNCTION</scope>
    <scope>SUBUNIT</scope>
</reference>
<accession>Q7A4G8</accession>
<comment type="function">
    <text evidence="1">Antitoxin component of a type II toxin-antitoxin (TA) system. Labile antitoxin that binds to cognate MazF toxin and counteracts its endoribonuclease activity.</text>
</comment>
<comment type="subunit">
    <text evidence="1">Homodimer. Forms a complex with cognate toxin MazF which inhibits the endoribonuclease activity of MazF.</text>
</comment>
<comment type="similarity">
    <text evidence="2">Belongs to the MazE/EndoAI family.</text>
</comment>
<sequence length="56" mass="6252">MLSFSQNRSHSLEQSLKEGYSQMADLNLSLANEAFPIECEACDCNETYLSSNSTNE</sequence>
<evidence type="ECO:0000269" key="1">
    <source>
    </source>
</evidence>
<evidence type="ECO:0000305" key="2"/>
<gene>
    <name type="primary">mazE</name>
    <name type="ordered locus">SA1873.1</name>
    <name type="ORF">SAS067</name>
</gene>
<feature type="chain" id="PRO_0000330717" description="Antitoxin MazE">
    <location>
        <begin position="1"/>
        <end position="56"/>
    </location>
</feature>
<organism>
    <name type="scientific">Staphylococcus aureus (strain N315)</name>
    <dbReference type="NCBI Taxonomy" id="158879"/>
    <lineage>
        <taxon>Bacteria</taxon>
        <taxon>Bacillati</taxon>
        <taxon>Bacillota</taxon>
        <taxon>Bacilli</taxon>
        <taxon>Bacillales</taxon>
        <taxon>Staphylococcaceae</taxon>
        <taxon>Staphylococcus</taxon>
    </lineage>
</organism>